<sequence length="214" mass="24265">MTTLADLRTNYSRASLDAADVNPNPFVQFDVWFKEALDAQLPEPNTMTLATVDESGRPSARIVLIKGADERGFVFFTNYESRKGRELAHNPNAALLFYWIELERQVRVEGRIEKTSEEESDRYFASRPLGSRIGAWASEQSAVIESRALLEAREKEIGARFGENPPRPPHWGGYRLVPSSIEFWQGRPSRLHDRLLYTRDAASASGWKIARLAP</sequence>
<comment type="function">
    <text evidence="1">Catalyzes the oxidation of either pyridoxine 5'-phosphate (PNP) or pyridoxamine 5'-phosphate (PMP) into pyridoxal 5'-phosphate (PLP).</text>
</comment>
<comment type="catalytic activity">
    <reaction evidence="1">
        <text>pyridoxamine 5'-phosphate + O2 + H2O = pyridoxal 5'-phosphate + H2O2 + NH4(+)</text>
        <dbReference type="Rhea" id="RHEA:15817"/>
        <dbReference type="ChEBI" id="CHEBI:15377"/>
        <dbReference type="ChEBI" id="CHEBI:15379"/>
        <dbReference type="ChEBI" id="CHEBI:16240"/>
        <dbReference type="ChEBI" id="CHEBI:28938"/>
        <dbReference type="ChEBI" id="CHEBI:58451"/>
        <dbReference type="ChEBI" id="CHEBI:597326"/>
        <dbReference type="EC" id="1.4.3.5"/>
    </reaction>
</comment>
<comment type="catalytic activity">
    <reaction evidence="1">
        <text>pyridoxine 5'-phosphate + O2 = pyridoxal 5'-phosphate + H2O2</text>
        <dbReference type="Rhea" id="RHEA:15149"/>
        <dbReference type="ChEBI" id="CHEBI:15379"/>
        <dbReference type="ChEBI" id="CHEBI:16240"/>
        <dbReference type="ChEBI" id="CHEBI:58589"/>
        <dbReference type="ChEBI" id="CHEBI:597326"/>
        <dbReference type="EC" id="1.4.3.5"/>
    </reaction>
</comment>
<comment type="cofactor">
    <cofactor evidence="1">
        <name>FMN</name>
        <dbReference type="ChEBI" id="CHEBI:58210"/>
    </cofactor>
    <text evidence="1">Binds 1 FMN per subunit.</text>
</comment>
<comment type="pathway">
    <text evidence="1">Cofactor metabolism; pyridoxal 5'-phosphate salvage; pyridoxal 5'-phosphate from pyridoxamine 5'-phosphate: step 1/1.</text>
</comment>
<comment type="pathway">
    <text evidence="1">Cofactor metabolism; pyridoxal 5'-phosphate salvage; pyridoxal 5'-phosphate from pyridoxine 5'-phosphate: step 1/1.</text>
</comment>
<comment type="subunit">
    <text evidence="1">Homodimer.</text>
</comment>
<comment type="similarity">
    <text evidence="1">Belongs to the pyridoxamine 5'-phosphate oxidase family.</text>
</comment>
<comment type="sequence caution" evidence="2">
    <conflict type="erroneous initiation">
        <sequence resource="EMBL-CDS" id="CAH34846"/>
    </conflict>
</comment>
<protein>
    <recommendedName>
        <fullName evidence="1">Pyridoxine/pyridoxamine 5'-phosphate oxidase</fullName>
        <ecNumber evidence="1">1.4.3.5</ecNumber>
    </recommendedName>
    <alternativeName>
        <fullName evidence="1">PNP/PMP oxidase</fullName>
        <shortName evidence="1">PNPOx</shortName>
    </alternativeName>
    <alternativeName>
        <fullName evidence="1">Pyridoxal 5'-phosphate synthase</fullName>
    </alternativeName>
</protein>
<organism>
    <name type="scientific">Burkholderia pseudomallei (strain K96243)</name>
    <dbReference type="NCBI Taxonomy" id="272560"/>
    <lineage>
        <taxon>Bacteria</taxon>
        <taxon>Pseudomonadati</taxon>
        <taxon>Pseudomonadota</taxon>
        <taxon>Betaproteobacteria</taxon>
        <taxon>Burkholderiales</taxon>
        <taxon>Burkholderiaceae</taxon>
        <taxon>Burkholderia</taxon>
        <taxon>pseudomallei group</taxon>
    </lineage>
</organism>
<dbReference type="EC" id="1.4.3.5" evidence="1"/>
<dbReference type="EMBL" id="BX571965">
    <property type="protein sequence ID" value="CAH34846.1"/>
    <property type="status" value="ALT_INIT"/>
    <property type="molecule type" value="Genomic_DNA"/>
</dbReference>
<dbReference type="RefSeq" id="WP_004522643.1">
    <property type="nucleotide sequence ID" value="NZ_CP009538.1"/>
</dbReference>
<dbReference type="RefSeq" id="YP_107479.2">
    <property type="nucleotide sequence ID" value="NC_006350.1"/>
</dbReference>
<dbReference type="SMR" id="Q63WN7"/>
<dbReference type="STRING" id="272560.BPSL0854"/>
<dbReference type="GeneID" id="93059361"/>
<dbReference type="KEGG" id="bps:BPSL0854"/>
<dbReference type="PATRIC" id="fig|272560.51.peg.744"/>
<dbReference type="eggNOG" id="COG0259">
    <property type="taxonomic scope" value="Bacteria"/>
</dbReference>
<dbReference type="UniPathway" id="UPA01068">
    <property type="reaction ID" value="UER00304"/>
</dbReference>
<dbReference type="UniPathway" id="UPA01068">
    <property type="reaction ID" value="UER00305"/>
</dbReference>
<dbReference type="Proteomes" id="UP000000605">
    <property type="component" value="Chromosome 1"/>
</dbReference>
<dbReference type="GO" id="GO:0010181">
    <property type="term" value="F:FMN binding"/>
    <property type="evidence" value="ECO:0007669"/>
    <property type="project" value="UniProtKB-UniRule"/>
</dbReference>
<dbReference type="GO" id="GO:0004733">
    <property type="term" value="F:pyridoxamine phosphate oxidase activity"/>
    <property type="evidence" value="ECO:0007669"/>
    <property type="project" value="UniProtKB-UniRule"/>
</dbReference>
<dbReference type="GO" id="GO:0008615">
    <property type="term" value="P:pyridoxine biosynthetic process"/>
    <property type="evidence" value="ECO:0007669"/>
    <property type="project" value="UniProtKB-KW"/>
</dbReference>
<dbReference type="FunFam" id="2.30.110.10:FF:000005">
    <property type="entry name" value="NAD(P)H-hydrate epimerase"/>
    <property type="match status" value="1"/>
</dbReference>
<dbReference type="Gene3D" id="2.30.110.10">
    <property type="entry name" value="Electron Transport, Fmn-binding Protein, Chain A"/>
    <property type="match status" value="1"/>
</dbReference>
<dbReference type="HAMAP" id="MF_01629">
    <property type="entry name" value="PdxH"/>
    <property type="match status" value="1"/>
</dbReference>
<dbReference type="InterPro" id="IPR000659">
    <property type="entry name" value="Pyridox_Oxase"/>
</dbReference>
<dbReference type="InterPro" id="IPR019740">
    <property type="entry name" value="Pyridox_Oxase_CS"/>
</dbReference>
<dbReference type="InterPro" id="IPR011576">
    <property type="entry name" value="Pyridox_Oxase_N"/>
</dbReference>
<dbReference type="InterPro" id="IPR019576">
    <property type="entry name" value="Pyridoxamine_oxidase_dimer_C"/>
</dbReference>
<dbReference type="InterPro" id="IPR012349">
    <property type="entry name" value="Split_barrel_FMN-bd"/>
</dbReference>
<dbReference type="NCBIfam" id="TIGR00558">
    <property type="entry name" value="pdxH"/>
    <property type="match status" value="1"/>
</dbReference>
<dbReference type="NCBIfam" id="NF004231">
    <property type="entry name" value="PRK05679.1"/>
    <property type="match status" value="1"/>
</dbReference>
<dbReference type="PANTHER" id="PTHR10851:SF0">
    <property type="entry name" value="PYRIDOXINE-5'-PHOSPHATE OXIDASE"/>
    <property type="match status" value="1"/>
</dbReference>
<dbReference type="PANTHER" id="PTHR10851">
    <property type="entry name" value="PYRIDOXINE-5-PHOSPHATE OXIDASE"/>
    <property type="match status" value="1"/>
</dbReference>
<dbReference type="Pfam" id="PF10590">
    <property type="entry name" value="PNP_phzG_C"/>
    <property type="match status" value="1"/>
</dbReference>
<dbReference type="Pfam" id="PF01243">
    <property type="entry name" value="PNPOx_N"/>
    <property type="match status" value="1"/>
</dbReference>
<dbReference type="PIRSF" id="PIRSF000190">
    <property type="entry name" value="Pyd_amn-ph_oxd"/>
    <property type="match status" value="1"/>
</dbReference>
<dbReference type="SUPFAM" id="SSF50475">
    <property type="entry name" value="FMN-binding split barrel"/>
    <property type="match status" value="1"/>
</dbReference>
<dbReference type="PROSITE" id="PS01064">
    <property type="entry name" value="PYRIDOX_OXIDASE"/>
    <property type="match status" value="1"/>
</dbReference>
<keyword id="KW-0285">Flavoprotein</keyword>
<keyword id="KW-0288">FMN</keyword>
<keyword id="KW-0560">Oxidoreductase</keyword>
<keyword id="KW-0664">Pyridoxine biosynthesis</keyword>
<keyword id="KW-1185">Reference proteome</keyword>
<gene>
    <name evidence="1" type="primary">pdxH</name>
    <name type="ordered locus">BPSL0854</name>
</gene>
<feature type="chain" id="PRO_0000167696" description="Pyridoxine/pyridoxamine 5'-phosphate oxidase">
    <location>
        <begin position="1"/>
        <end position="214"/>
    </location>
</feature>
<feature type="binding site" evidence="1">
    <location>
        <begin position="8"/>
        <end position="11"/>
    </location>
    <ligand>
        <name>substrate</name>
    </ligand>
</feature>
<feature type="binding site" evidence="1">
    <location>
        <begin position="61"/>
        <end position="66"/>
    </location>
    <ligand>
        <name>FMN</name>
        <dbReference type="ChEBI" id="CHEBI:58210"/>
    </ligand>
</feature>
<feature type="binding site" evidence="1">
    <location>
        <position position="66"/>
    </location>
    <ligand>
        <name>substrate</name>
    </ligand>
</feature>
<feature type="binding site" evidence="1">
    <location>
        <begin position="76"/>
        <end position="77"/>
    </location>
    <ligand>
        <name>FMN</name>
        <dbReference type="ChEBI" id="CHEBI:58210"/>
    </ligand>
</feature>
<feature type="binding site" evidence="1">
    <location>
        <position position="82"/>
    </location>
    <ligand>
        <name>FMN</name>
        <dbReference type="ChEBI" id="CHEBI:58210"/>
    </ligand>
</feature>
<feature type="binding site" evidence="1">
    <location>
        <position position="83"/>
    </location>
    <ligand>
        <name>FMN</name>
        <dbReference type="ChEBI" id="CHEBI:58210"/>
    </ligand>
</feature>
<feature type="binding site" evidence="1">
    <location>
        <position position="105"/>
    </location>
    <ligand>
        <name>FMN</name>
        <dbReference type="ChEBI" id="CHEBI:58210"/>
    </ligand>
</feature>
<feature type="binding site" evidence="1">
    <location>
        <position position="123"/>
    </location>
    <ligand>
        <name>substrate</name>
    </ligand>
</feature>
<feature type="binding site" evidence="1">
    <location>
        <position position="127"/>
    </location>
    <ligand>
        <name>substrate</name>
    </ligand>
</feature>
<feature type="binding site" evidence="1">
    <location>
        <position position="131"/>
    </location>
    <ligand>
        <name>substrate</name>
    </ligand>
</feature>
<feature type="binding site" evidence="1">
    <location>
        <begin position="140"/>
        <end position="141"/>
    </location>
    <ligand>
        <name>FMN</name>
        <dbReference type="ChEBI" id="CHEBI:58210"/>
    </ligand>
</feature>
<feature type="binding site" evidence="1">
    <location>
        <position position="184"/>
    </location>
    <ligand>
        <name>FMN</name>
        <dbReference type="ChEBI" id="CHEBI:58210"/>
    </ligand>
</feature>
<feature type="binding site" evidence="1">
    <location>
        <begin position="190"/>
        <end position="192"/>
    </location>
    <ligand>
        <name>substrate</name>
    </ligand>
</feature>
<feature type="binding site" evidence="1">
    <location>
        <position position="194"/>
    </location>
    <ligand>
        <name>FMN</name>
        <dbReference type="ChEBI" id="CHEBI:58210"/>
    </ligand>
</feature>
<reference key="1">
    <citation type="journal article" date="2004" name="Proc. Natl. Acad. Sci. U.S.A.">
        <title>Genomic plasticity of the causative agent of melioidosis, Burkholderia pseudomallei.</title>
        <authorList>
            <person name="Holden M.T.G."/>
            <person name="Titball R.W."/>
            <person name="Peacock S.J."/>
            <person name="Cerdeno-Tarraga A.-M."/>
            <person name="Atkins T."/>
            <person name="Crossman L.C."/>
            <person name="Pitt T."/>
            <person name="Churcher C."/>
            <person name="Mungall K.L."/>
            <person name="Bentley S.D."/>
            <person name="Sebaihia M."/>
            <person name="Thomson N.R."/>
            <person name="Bason N."/>
            <person name="Beacham I.R."/>
            <person name="Brooks K."/>
            <person name="Brown K.A."/>
            <person name="Brown N.F."/>
            <person name="Challis G.L."/>
            <person name="Cherevach I."/>
            <person name="Chillingworth T."/>
            <person name="Cronin A."/>
            <person name="Crossett B."/>
            <person name="Davis P."/>
            <person name="DeShazer D."/>
            <person name="Feltwell T."/>
            <person name="Fraser A."/>
            <person name="Hance Z."/>
            <person name="Hauser H."/>
            <person name="Holroyd S."/>
            <person name="Jagels K."/>
            <person name="Keith K.E."/>
            <person name="Maddison M."/>
            <person name="Moule S."/>
            <person name="Price C."/>
            <person name="Quail M.A."/>
            <person name="Rabbinowitsch E."/>
            <person name="Rutherford K."/>
            <person name="Sanders M."/>
            <person name="Simmonds M."/>
            <person name="Songsivilai S."/>
            <person name="Stevens K."/>
            <person name="Tumapa S."/>
            <person name="Vesaratchavest M."/>
            <person name="Whitehead S."/>
            <person name="Yeats C."/>
            <person name="Barrell B.G."/>
            <person name="Oyston P.C.F."/>
            <person name="Parkhill J."/>
        </authorList>
    </citation>
    <scope>NUCLEOTIDE SEQUENCE [LARGE SCALE GENOMIC DNA]</scope>
    <source>
        <strain>K96243</strain>
    </source>
</reference>
<name>PDXH_BURPS</name>
<accession>Q63WN7</accession>
<evidence type="ECO:0000255" key="1">
    <source>
        <dbReference type="HAMAP-Rule" id="MF_01629"/>
    </source>
</evidence>
<evidence type="ECO:0000305" key="2"/>
<proteinExistence type="inferred from homology"/>